<feature type="chain" id="PRO_1000095820" description="Tryptophan synthase beta chain">
    <location>
        <begin position="1"/>
        <end position="397"/>
    </location>
</feature>
<feature type="modified residue" description="N6-(pyridoxal phosphate)lysine" evidence="1">
    <location>
        <position position="87"/>
    </location>
</feature>
<proteinExistence type="inferred from homology"/>
<accession>B4T6X1</accession>
<organism>
    <name type="scientific">Salmonella newport (strain SL254)</name>
    <dbReference type="NCBI Taxonomy" id="423368"/>
    <lineage>
        <taxon>Bacteria</taxon>
        <taxon>Pseudomonadati</taxon>
        <taxon>Pseudomonadota</taxon>
        <taxon>Gammaproteobacteria</taxon>
        <taxon>Enterobacterales</taxon>
        <taxon>Enterobacteriaceae</taxon>
        <taxon>Salmonella</taxon>
    </lineage>
</organism>
<protein>
    <recommendedName>
        <fullName evidence="1">Tryptophan synthase beta chain</fullName>
        <ecNumber evidence="1">4.2.1.20</ecNumber>
    </recommendedName>
</protein>
<name>TRPB_SALNS</name>
<comment type="function">
    <text evidence="1">The beta subunit is responsible for the synthesis of L-tryptophan from indole and L-serine.</text>
</comment>
<comment type="catalytic activity">
    <reaction evidence="1">
        <text>(1S,2R)-1-C-(indol-3-yl)glycerol 3-phosphate + L-serine = D-glyceraldehyde 3-phosphate + L-tryptophan + H2O</text>
        <dbReference type="Rhea" id="RHEA:10532"/>
        <dbReference type="ChEBI" id="CHEBI:15377"/>
        <dbReference type="ChEBI" id="CHEBI:33384"/>
        <dbReference type="ChEBI" id="CHEBI:57912"/>
        <dbReference type="ChEBI" id="CHEBI:58866"/>
        <dbReference type="ChEBI" id="CHEBI:59776"/>
        <dbReference type="EC" id="4.2.1.20"/>
    </reaction>
</comment>
<comment type="cofactor">
    <cofactor evidence="1">
        <name>pyridoxal 5'-phosphate</name>
        <dbReference type="ChEBI" id="CHEBI:597326"/>
    </cofactor>
</comment>
<comment type="pathway">
    <text evidence="1">Amino-acid biosynthesis; L-tryptophan biosynthesis; L-tryptophan from chorismate: step 5/5.</text>
</comment>
<comment type="subunit">
    <text evidence="1">Tetramer of two alpha and two beta chains.</text>
</comment>
<comment type="similarity">
    <text evidence="1">Belongs to the TrpB family.</text>
</comment>
<dbReference type="EC" id="4.2.1.20" evidence="1"/>
<dbReference type="EMBL" id="CP001113">
    <property type="protein sequence ID" value="ACF64937.1"/>
    <property type="molecule type" value="Genomic_DNA"/>
</dbReference>
<dbReference type="RefSeq" id="WP_000209485.1">
    <property type="nucleotide sequence ID" value="NZ_CCMR01000003.1"/>
</dbReference>
<dbReference type="SMR" id="B4T6X1"/>
<dbReference type="KEGG" id="see:SNSL254_A1853"/>
<dbReference type="HOGENOM" id="CLU_016734_3_1_6"/>
<dbReference type="UniPathway" id="UPA00035">
    <property type="reaction ID" value="UER00044"/>
</dbReference>
<dbReference type="Proteomes" id="UP000008824">
    <property type="component" value="Chromosome"/>
</dbReference>
<dbReference type="GO" id="GO:0005737">
    <property type="term" value="C:cytoplasm"/>
    <property type="evidence" value="ECO:0007669"/>
    <property type="project" value="TreeGrafter"/>
</dbReference>
<dbReference type="GO" id="GO:0004834">
    <property type="term" value="F:tryptophan synthase activity"/>
    <property type="evidence" value="ECO:0007669"/>
    <property type="project" value="UniProtKB-UniRule"/>
</dbReference>
<dbReference type="CDD" id="cd06446">
    <property type="entry name" value="Trp-synth_B"/>
    <property type="match status" value="1"/>
</dbReference>
<dbReference type="FunFam" id="3.40.50.1100:FF:000001">
    <property type="entry name" value="Tryptophan synthase beta chain"/>
    <property type="match status" value="1"/>
</dbReference>
<dbReference type="FunFam" id="3.40.50.1100:FF:000004">
    <property type="entry name" value="Tryptophan synthase beta chain"/>
    <property type="match status" value="1"/>
</dbReference>
<dbReference type="Gene3D" id="3.40.50.1100">
    <property type="match status" value="2"/>
</dbReference>
<dbReference type="HAMAP" id="MF_00133">
    <property type="entry name" value="Trp_synth_beta"/>
    <property type="match status" value="1"/>
</dbReference>
<dbReference type="InterPro" id="IPR006653">
    <property type="entry name" value="Trp_synth_b_CS"/>
</dbReference>
<dbReference type="InterPro" id="IPR006654">
    <property type="entry name" value="Trp_synth_beta"/>
</dbReference>
<dbReference type="InterPro" id="IPR023026">
    <property type="entry name" value="Trp_synth_beta/beta-like"/>
</dbReference>
<dbReference type="InterPro" id="IPR001926">
    <property type="entry name" value="TrpB-like_PALP"/>
</dbReference>
<dbReference type="InterPro" id="IPR036052">
    <property type="entry name" value="TrpB-like_PALP_sf"/>
</dbReference>
<dbReference type="NCBIfam" id="TIGR00263">
    <property type="entry name" value="trpB"/>
    <property type="match status" value="1"/>
</dbReference>
<dbReference type="PANTHER" id="PTHR48077:SF3">
    <property type="entry name" value="TRYPTOPHAN SYNTHASE"/>
    <property type="match status" value="1"/>
</dbReference>
<dbReference type="PANTHER" id="PTHR48077">
    <property type="entry name" value="TRYPTOPHAN SYNTHASE-RELATED"/>
    <property type="match status" value="1"/>
</dbReference>
<dbReference type="Pfam" id="PF00291">
    <property type="entry name" value="PALP"/>
    <property type="match status" value="1"/>
</dbReference>
<dbReference type="PIRSF" id="PIRSF001413">
    <property type="entry name" value="Trp_syn_beta"/>
    <property type="match status" value="1"/>
</dbReference>
<dbReference type="SUPFAM" id="SSF53686">
    <property type="entry name" value="Tryptophan synthase beta subunit-like PLP-dependent enzymes"/>
    <property type="match status" value="1"/>
</dbReference>
<dbReference type="PROSITE" id="PS00168">
    <property type="entry name" value="TRP_SYNTHASE_BETA"/>
    <property type="match status" value="1"/>
</dbReference>
<evidence type="ECO:0000255" key="1">
    <source>
        <dbReference type="HAMAP-Rule" id="MF_00133"/>
    </source>
</evidence>
<sequence>MTTLLNPYFGEFGGMYVPQILMPALNQLEEAFVSAQKDPEFQAQFADLLKNYAGRPTALTKCQNITAGTRTTLYLKREDLLHGGAHKTNQVLGQALLAKRMGKSEIIAETGAGQHGVASALASALLGLKCRIYMGAKDVERQSPNVFRMRLMGAEVIPVHSGSATLKDACNEALRDWSGSYETAHYMLGTAAGPHPYPTIVREFQRMIGEETKAQILDKEGRLPDAVIACVGGGSNAIGMFADFINDTSVGLIGVEPGGHGIETGEHGAPLKHGRVGIYFGMKAPMMQTADGQIEESYSISAGLDFPSVGPQHAYLNSIGRADYVSITDDEALEAFKTLCRHEGIIPALESSHALAHALKMMREQPEKEQLLVVNLSGRGDKDIFTVHDILKARGEI</sequence>
<keyword id="KW-0028">Amino-acid biosynthesis</keyword>
<keyword id="KW-0057">Aromatic amino acid biosynthesis</keyword>
<keyword id="KW-0456">Lyase</keyword>
<keyword id="KW-0663">Pyridoxal phosphate</keyword>
<keyword id="KW-0822">Tryptophan biosynthesis</keyword>
<gene>
    <name evidence="1" type="primary">trpB</name>
    <name type="ordered locus">SNSL254_A1853</name>
</gene>
<reference key="1">
    <citation type="journal article" date="2011" name="J. Bacteriol.">
        <title>Comparative genomics of 28 Salmonella enterica isolates: evidence for CRISPR-mediated adaptive sublineage evolution.</title>
        <authorList>
            <person name="Fricke W.F."/>
            <person name="Mammel M.K."/>
            <person name="McDermott P.F."/>
            <person name="Tartera C."/>
            <person name="White D.G."/>
            <person name="Leclerc J.E."/>
            <person name="Ravel J."/>
            <person name="Cebula T.A."/>
        </authorList>
    </citation>
    <scope>NUCLEOTIDE SEQUENCE [LARGE SCALE GENOMIC DNA]</scope>
    <source>
        <strain>SL254</strain>
    </source>
</reference>